<reference key="1">
    <citation type="journal article" date="2004" name="Nature">
        <title>Genome evolution in yeasts.</title>
        <authorList>
            <person name="Dujon B."/>
            <person name="Sherman D."/>
            <person name="Fischer G."/>
            <person name="Durrens P."/>
            <person name="Casaregola S."/>
            <person name="Lafontaine I."/>
            <person name="de Montigny J."/>
            <person name="Marck C."/>
            <person name="Neuveglise C."/>
            <person name="Talla E."/>
            <person name="Goffard N."/>
            <person name="Frangeul L."/>
            <person name="Aigle M."/>
            <person name="Anthouard V."/>
            <person name="Babour A."/>
            <person name="Barbe V."/>
            <person name="Barnay S."/>
            <person name="Blanchin S."/>
            <person name="Beckerich J.-M."/>
            <person name="Beyne E."/>
            <person name="Bleykasten C."/>
            <person name="Boisrame A."/>
            <person name="Boyer J."/>
            <person name="Cattolico L."/>
            <person name="Confanioleri F."/>
            <person name="de Daruvar A."/>
            <person name="Despons L."/>
            <person name="Fabre E."/>
            <person name="Fairhead C."/>
            <person name="Ferry-Dumazet H."/>
            <person name="Groppi A."/>
            <person name="Hantraye F."/>
            <person name="Hennequin C."/>
            <person name="Jauniaux N."/>
            <person name="Joyet P."/>
            <person name="Kachouri R."/>
            <person name="Kerrest A."/>
            <person name="Koszul R."/>
            <person name="Lemaire M."/>
            <person name="Lesur I."/>
            <person name="Ma L."/>
            <person name="Muller H."/>
            <person name="Nicaud J.-M."/>
            <person name="Nikolski M."/>
            <person name="Oztas S."/>
            <person name="Ozier-Kalogeropoulos O."/>
            <person name="Pellenz S."/>
            <person name="Potier S."/>
            <person name="Richard G.-F."/>
            <person name="Straub M.-L."/>
            <person name="Suleau A."/>
            <person name="Swennen D."/>
            <person name="Tekaia F."/>
            <person name="Wesolowski-Louvel M."/>
            <person name="Westhof E."/>
            <person name="Wirth B."/>
            <person name="Zeniou-Meyer M."/>
            <person name="Zivanovic Y."/>
            <person name="Bolotin-Fukuhara M."/>
            <person name="Thierry A."/>
            <person name="Bouchier C."/>
            <person name="Caudron B."/>
            <person name="Scarpelli C."/>
            <person name="Gaillardin C."/>
            <person name="Weissenbach J."/>
            <person name="Wincker P."/>
            <person name="Souciet J.-L."/>
        </authorList>
    </citation>
    <scope>NUCLEOTIDE SEQUENCE [LARGE SCALE GENOMIC DNA]</scope>
    <source>
        <strain>ATCC 2001 / BCRC 20586 / JCM 3761 / NBRC 0622 / NRRL Y-65 / CBS 138</strain>
    </source>
</reference>
<organism>
    <name type="scientific">Candida glabrata (strain ATCC 2001 / BCRC 20586 / JCM 3761 / NBRC 0622 / NRRL Y-65 / CBS 138)</name>
    <name type="common">Yeast</name>
    <name type="synonym">Nakaseomyces glabratus</name>
    <dbReference type="NCBI Taxonomy" id="284593"/>
    <lineage>
        <taxon>Eukaryota</taxon>
        <taxon>Fungi</taxon>
        <taxon>Dikarya</taxon>
        <taxon>Ascomycota</taxon>
        <taxon>Saccharomycotina</taxon>
        <taxon>Saccharomycetes</taxon>
        <taxon>Saccharomycetales</taxon>
        <taxon>Saccharomycetaceae</taxon>
        <taxon>Nakaseomyces</taxon>
    </lineage>
</organism>
<name>INP2_CANGA</name>
<keyword id="KW-0325">Glycoprotein</keyword>
<keyword id="KW-0472">Membrane</keyword>
<keyword id="KW-0576">Peroxisome</keyword>
<keyword id="KW-0675">Receptor</keyword>
<keyword id="KW-1185">Reference proteome</keyword>
<keyword id="KW-0812">Transmembrane</keyword>
<keyword id="KW-1133">Transmembrane helix</keyword>
<feature type="chain" id="PRO_0000308733" description="Inheritance of peroxisomes protein 2">
    <location>
        <begin position="1"/>
        <end position="666"/>
    </location>
</feature>
<feature type="transmembrane region" description="Helical" evidence="2">
    <location>
        <begin position="171"/>
        <end position="187"/>
    </location>
</feature>
<feature type="glycosylation site" description="N-linked (GlcNAc...) asparagine" evidence="2">
    <location>
        <position position="227"/>
    </location>
</feature>
<feature type="glycosylation site" description="N-linked (GlcNAc...) asparagine" evidence="2">
    <location>
        <position position="414"/>
    </location>
</feature>
<feature type="glycosylation site" description="N-linked (GlcNAc...) asparagine" evidence="2">
    <location>
        <position position="464"/>
    </location>
</feature>
<feature type="glycosylation site" description="N-linked (GlcNAc...) asparagine" evidence="2">
    <location>
        <position position="471"/>
    </location>
</feature>
<feature type="glycosylation site" description="N-linked (GlcNAc...) asparagine" evidence="2">
    <location>
        <position position="512"/>
    </location>
</feature>
<feature type="glycosylation site" description="N-linked (GlcNAc...) asparagine" evidence="2">
    <location>
        <position position="563"/>
    </location>
</feature>
<feature type="glycosylation site" description="N-linked (GlcNAc...) asparagine" evidence="2">
    <location>
        <position position="609"/>
    </location>
</feature>
<protein>
    <recommendedName>
        <fullName>Inheritance of peroxisomes protein 2</fullName>
    </recommendedName>
</protein>
<comment type="function">
    <text evidence="1">Required for peroxisome inheritance.</text>
</comment>
<comment type="subcellular location">
    <subcellularLocation>
        <location evidence="1">Peroxisome membrane</location>
        <topology evidence="1">Single-pass membrane protein</topology>
    </subcellularLocation>
</comment>
<comment type="similarity">
    <text evidence="3">Belongs to the INP2 family.</text>
</comment>
<sequence>MDSGATSFNVLGEWRRTVQSKLLGERHVGFVAEENKLHCGSIKDRDSVVLTPIANIQQGTVNYNHMFDNLIWVSDVQFMEELQYTLISSPFLNDIHHHQMPLSVANSIMDFHRDRRFHRESFIFSVPTKLGYLKARYGDKKLELRKNINFMDVHKTVYSILKHLRNNNKKCTWRILSVLMIILYLGYEQAHFHNQYPKYSFLTQLKAMMGKLQQFDSIQRKYFENINITKEFDKTGNEIFQLLHSITHIASMKLYHLSEFLLRFTNIGKLSKYCGVYGIDMNLAYLTNVRILTSTKQELHLLQDKIEFLRKFLLCCFLSVEHQDYNEKVKNIIFSTYLLKLFPGYTEDNNCKSLFSSQWSVLSTVIVKFNQDLSFLYSVLNENKELIYSTETREESETDEMLKERYKFRYKDKNQSLMLKALSQIHLVEEQLISVQDADDNEETKCLINDHIKNLQQLILCCNNKTNSGTNFSNRHTSLQGKGLFLDVLKSPEEKFTPIFQEMEVSRIGIKNVSDNDDLESILTDNENYEHIEPAHFIDDRNNGGAFTIYEDSTCYADDCYKNASELRKLNDEQLRRKLNEKIQLFATENKKNRNQIRQQKSLELLRSNSTLTALNELKSNTNYESLDKGVKTKKRAHFMEQELYSEETIPFYYEINDFLYNQANQ</sequence>
<proteinExistence type="inferred from homology"/>
<dbReference type="EMBL" id="CR380954">
    <property type="protein sequence ID" value="CAG59921.1"/>
    <property type="molecule type" value="Genomic_DNA"/>
</dbReference>
<dbReference type="RefSeq" id="XP_446988.1">
    <property type="nucleotide sequence ID" value="XM_446988.1"/>
</dbReference>
<dbReference type="SMR" id="Q6FS06"/>
<dbReference type="FunCoup" id="Q6FS06">
    <property type="interactions" value="128"/>
</dbReference>
<dbReference type="STRING" id="284593.Q6FS06"/>
<dbReference type="GlyCosmos" id="Q6FS06">
    <property type="glycosylation" value="7 sites, No reported glycans"/>
</dbReference>
<dbReference type="EnsemblFungi" id="CAGL0H04455g-T">
    <property type="protein sequence ID" value="CAGL0H04455g-T-p1"/>
    <property type="gene ID" value="CAGL0H04455g"/>
</dbReference>
<dbReference type="KEGG" id="cgr:2888672"/>
<dbReference type="CGD" id="CAL0130587">
    <property type="gene designation" value="CAGL0H04455g"/>
</dbReference>
<dbReference type="VEuPathDB" id="FungiDB:CAGL0H04455g"/>
<dbReference type="eggNOG" id="ENOG502QR0E">
    <property type="taxonomic scope" value="Eukaryota"/>
</dbReference>
<dbReference type="HOGENOM" id="CLU_024345_0_0_1"/>
<dbReference type="InParanoid" id="Q6FS06"/>
<dbReference type="OMA" id="FQYTIIA"/>
<dbReference type="Proteomes" id="UP000002428">
    <property type="component" value="Chromosome H"/>
</dbReference>
<dbReference type="GO" id="GO:0005778">
    <property type="term" value="C:peroxisomal membrane"/>
    <property type="evidence" value="ECO:0007669"/>
    <property type="project" value="UniProtKB-SubCell"/>
</dbReference>
<dbReference type="GO" id="GO:0045033">
    <property type="term" value="P:peroxisome inheritance"/>
    <property type="evidence" value="ECO:0007669"/>
    <property type="project" value="InterPro"/>
</dbReference>
<dbReference type="InterPro" id="IPR026235">
    <property type="entry name" value="INP2"/>
</dbReference>
<dbReference type="PRINTS" id="PR02104">
    <property type="entry name" value="INPROXISOME2"/>
</dbReference>
<evidence type="ECO:0000250" key="1"/>
<evidence type="ECO:0000255" key="2"/>
<evidence type="ECO:0000305" key="3"/>
<gene>
    <name type="primary">INP2</name>
    <name type="ordered locus">CAGL0H04455g</name>
</gene>
<accession>Q6FS06</accession>